<sequence>MPNASLVIANWKMNGNRELTKTMSAALREKLNQLQQVKLVICPPFTLIGELANQCYYDDIAIGAQNVSEHTGGAFTGEISTAQLQEFGVSYVLVGHSERRQLFAETDKMVNEKALATVNAGMTAVICVGENKAQRDEGNTWEVVAQQAQAALADLPKEQAGKIVLAYEPVWAIGTGETASPEQAQDVHAKLRALLVEQFGAIGEKMPLLYGGSVKADNAAELFAQKDIDGGLIGGASLKESDFVAICQAAQG</sequence>
<feature type="chain" id="PRO_0000307482" description="Triosephosphate isomerase">
    <location>
        <begin position="1"/>
        <end position="252"/>
    </location>
</feature>
<feature type="active site" description="Electrophile" evidence="1">
    <location>
        <position position="96"/>
    </location>
</feature>
<feature type="active site" description="Proton acceptor" evidence="1">
    <location>
        <position position="168"/>
    </location>
</feature>
<feature type="binding site" evidence="1">
    <location>
        <begin position="10"/>
        <end position="12"/>
    </location>
    <ligand>
        <name>substrate</name>
    </ligand>
</feature>
<feature type="binding site" evidence="1">
    <location>
        <position position="174"/>
    </location>
    <ligand>
        <name>substrate</name>
    </ligand>
</feature>
<feature type="binding site" evidence="1">
    <location>
        <position position="213"/>
    </location>
    <ligand>
        <name>substrate</name>
    </ligand>
</feature>
<feature type="binding site" evidence="1">
    <location>
        <begin position="234"/>
        <end position="235"/>
    </location>
    <ligand>
        <name>substrate</name>
    </ligand>
</feature>
<evidence type="ECO:0000255" key="1">
    <source>
        <dbReference type="HAMAP-Rule" id="MF_00147"/>
    </source>
</evidence>
<comment type="function">
    <text evidence="1">Involved in the gluconeogenesis. Catalyzes stereospecifically the conversion of dihydroxyacetone phosphate (DHAP) to D-glyceraldehyde-3-phosphate (G3P).</text>
</comment>
<comment type="catalytic activity">
    <reaction evidence="1">
        <text>D-glyceraldehyde 3-phosphate = dihydroxyacetone phosphate</text>
        <dbReference type="Rhea" id="RHEA:18585"/>
        <dbReference type="ChEBI" id="CHEBI:57642"/>
        <dbReference type="ChEBI" id="CHEBI:59776"/>
        <dbReference type="EC" id="5.3.1.1"/>
    </reaction>
</comment>
<comment type="pathway">
    <text evidence="1">Carbohydrate biosynthesis; gluconeogenesis.</text>
</comment>
<comment type="pathway">
    <text evidence="1">Carbohydrate degradation; glycolysis; D-glyceraldehyde 3-phosphate from glycerone phosphate: step 1/1.</text>
</comment>
<comment type="subunit">
    <text evidence="1">Homodimer.</text>
</comment>
<comment type="subcellular location">
    <subcellularLocation>
        <location evidence="1">Cytoplasm</location>
    </subcellularLocation>
</comment>
<comment type="similarity">
    <text evidence="1">Belongs to the triosephosphate isomerase family.</text>
</comment>
<name>TPIS_IDILO</name>
<protein>
    <recommendedName>
        <fullName evidence="1">Triosephosphate isomerase</fullName>
        <shortName evidence="1">TIM</shortName>
        <shortName evidence="1">TPI</shortName>
        <ecNumber evidence="1">5.3.1.1</ecNumber>
    </recommendedName>
    <alternativeName>
        <fullName evidence="1">Triose-phosphate isomerase</fullName>
    </alternativeName>
</protein>
<proteinExistence type="inferred from homology"/>
<organism>
    <name type="scientific">Idiomarina loihiensis (strain ATCC BAA-735 / DSM 15497 / L2-TR)</name>
    <dbReference type="NCBI Taxonomy" id="283942"/>
    <lineage>
        <taxon>Bacteria</taxon>
        <taxon>Pseudomonadati</taxon>
        <taxon>Pseudomonadota</taxon>
        <taxon>Gammaproteobacteria</taxon>
        <taxon>Alteromonadales</taxon>
        <taxon>Idiomarinaceae</taxon>
        <taxon>Idiomarina</taxon>
    </lineage>
</organism>
<gene>
    <name evidence="1" type="primary">tpiA</name>
    <name type="ordered locus">IL0972</name>
</gene>
<keyword id="KW-0963">Cytoplasm</keyword>
<keyword id="KW-0312">Gluconeogenesis</keyword>
<keyword id="KW-0324">Glycolysis</keyword>
<keyword id="KW-0413">Isomerase</keyword>
<keyword id="KW-1185">Reference proteome</keyword>
<dbReference type="EC" id="5.3.1.1" evidence="1"/>
<dbReference type="EMBL" id="AE017340">
    <property type="protein sequence ID" value="AAV81812.1"/>
    <property type="molecule type" value="Genomic_DNA"/>
</dbReference>
<dbReference type="RefSeq" id="WP_011234223.1">
    <property type="nucleotide sequence ID" value="NC_006512.1"/>
</dbReference>
<dbReference type="SMR" id="Q5R0R3"/>
<dbReference type="STRING" id="283942.IL0972"/>
<dbReference type="GeneID" id="41336134"/>
<dbReference type="KEGG" id="ilo:IL0972"/>
<dbReference type="eggNOG" id="COG0149">
    <property type="taxonomic scope" value="Bacteria"/>
</dbReference>
<dbReference type="HOGENOM" id="CLU_024251_2_3_6"/>
<dbReference type="OrthoDB" id="9809429at2"/>
<dbReference type="UniPathway" id="UPA00109">
    <property type="reaction ID" value="UER00189"/>
</dbReference>
<dbReference type="UniPathway" id="UPA00138"/>
<dbReference type="Proteomes" id="UP000001171">
    <property type="component" value="Chromosome"/>
</dbReference>
<dbReference type="GO" id="GO:0005829">
    <property type="term" value="C:cytosol"/>
    <property type="evidence" value="ECO:0007669"/>
    <property type="project" value="TreeGrafter"/>
</dbReference>
<dbReference type="GO" id="GO:0004807">
    <property type="term" value="F:triose-phosphate isomerase activity"/>
    <property type="evidence" value="ECO:0007669"/>
    <property type="project" value="UniProtKB-UniRule"/>
</dbReference>
<dbReference type="GO" id="GO:0006094">
    <property type="term" value="P:gluconeogenesis"/>
    <property type="evidence" value="ECO:0007669"/>
    <property type="project" value="UniProtKB-UniRule"/>
</dbReference>
<dbReference type="GO" id="GO:0046166">
    <property type="term" value="P:glyceraldehyde-3-phosphate biosynthetic process"/>
    <property type="evidence" value="ECO:0007669"/>
    <property type="project" value="TreeGrafter"/>
</dbReference>
<dbReference type="GO" id="GO:0019563">
    <property type="term" value="P:glycerol catabolic process"/>
    <property type="evidence" value="ECO:0007669"/>
    <property type="project" value="TreeGrafter"/>
</dbReference>
<dbReference type="GO" id="GO:0006096">
    <property type="term" value="P:glycolytic process"/>
    <property type="evidence" value="ECO:0007669"/>
    <property type="project" value="UniProtKB-UniRule"/>
</dbReference>
<dbReference type="CDD" id="cd00311">
    <property type="entry name" value="TIM"/>
    <property type="match status" value="1"/>
</dbReference>
<dbReference type="FunFam" id="3.20.20.70:FF:000016">
    <property type="entry name" value="Triosephosphate isomerase"/>
    <property type="match status" value="1"/>
</dbReference>
<dbReference type="Gene3D" id="3.20.20.70">
    <property type="entry name" value="Aldolase class I"/>
    <property type="match status" value="1"/>
</dbReference>
<dbReference type="HAMAP" id="MF_00147_B">
    <property type="entry name" value="TIM_B"/>
    <property type="match status" value="1"/>
</dbReference>
<dbReference type="InterPro" id="IPR013785">
    <property type="entry name" value="Aldolase_TIM"/>
</dbReference>
<dbReference type="InterPro" id="IPR035990">
    <property type="entry name" value="TIM_sf"/>
</dbReference>
<dbReference type="InterPro" id="IPR022896">
    <property type="entry name" value="TrioseP_Isoase_bac/euk"/>
</dbReference>
<dbReference type="InterPro" id="IPR000652">
    <property type="entry name" value="Triosephosphate_isomerase"/>
</dbReference>
<dbReference type="InterPro" id="IPR020861">
    <property type="entry name" value="Triosephosphate_isomerase_AS"/>
</dbReference>
<dbReference type="NCBIfam" id="TIGR00419">
    <property type="entry name" value="tim"/>
    <property type="match status" value="1"/>
</dbReference>
<dbReference type="PANTHER" id="PTHR21139">
    <property type="entry name" value="TRIOSEPHOSPHATE ISOMERASE"/>
    <property type="match status" value="1"/>
</dbReference>
<dbReference type="PANTHER" id="PTHR21139:SF42">
    <property type="entry name" value="TRIOSEPHOSPHATE ISOMERASE"/>
    <property type="match status" value="1"/>
</dbReference>
<dbReference type="Pfam" id="PF00121">
    <property type="entry name" value="TIM"/>
    <property type="match status" value="1"/>
</dbReference>
<dbReference type="SUPFAM" id="SSF51351">
    <property type="entry name" value="Triosephosphate isomerase (TIM)"/>
    <property type="match status" value="1"/>
</dbReference>
<dbReference type="PROSITE" id="PS00171">
    <property type="entry name" value="TIM_1"/>
    <property type="match status" value="1"/>
</dbReference>
<dbReference type="PROSITE" id="PS51440">
    <property type="entry name" value="TIM_2"/>
    <property type="match status" value="1"/>
</dbReference>
<reference key="1">
    <citation type="journal article" date="2004" name="Proc. Natl. Acad. Sci. U.S.A.">
        <title>Genome sequence of the deep-sea gamma-proteobacterium Idiomarina loihiensis reveals amino acid fermentation as a source of carbon and energy.</title>
        <authorList>
            <person name="Hou S."/>
            <person name="Saw J.H."/>
            <person name="Lee K.S."/>
            <person name="Freitas T.A."/>
            <person name="Belisle C."/>
            <person name="Kawarabayasi Y."/>
            <person name="Donachie S.P."/>
            <person name="Pikina A."/>
            <person name="Galperin M.Y."/>
            <person name="Koonin E.V."/>
            <person name="Makarova K.S."/>
            <person name="Omelchenko M.V."/>
            <person name="Sorokin A."/>
            <person name="Wolf Y.I."/>
            <person name="Li Q.X."/>
            <person name="Keum Y.S."/>
            <person name="Campbell S."/>
            <person name="Denery J."/>
            <person name="Aizawa S."/>
            <person name="Shibata S."/>
            <person name="Malahoff A."/>
            <person name="Alam M."/>
        </authorList>
    </citation>
    <scope>NUCLEOTIDE SEQUENCE [LARGE SCALE GENOMIC DNA]</scope>
    <source>
        <strain>ATCC BAA-735 / DSM 15497 / L2-TR</strain>
    </source>
</reference>
<accession>Q5R0R3</accession>